<gene>
    <name type="primary">rluB</name>
    <name type="ordered locus">PA3179</name>
</gene>
<evidence type="ECO:0000250" key="1"/>
<evidence type="ECO:0000255" key="2">
    <source>
        <dbReference type="PROSITE-ProRule" id="PRU00182"/>
    </source>
</evidence>
<evidence type="ECO:0000256" key="3">
    <source>
        <dbReference type="SAM" id="MobiDB-lite"/>
    </source>
</evidence>
<evidence type="ECO:0000305" key="4"/>
<comment type="function">
    <text evidence="1">Responsible for synthesis of pseudouridine from uracil-2605 in 23S ribosomal RNA.</text>
</comment>
<comment type="catalytic activity">
    <reaction>
        <text>uridine(2605) in 23S rRNA = pseudouridine(2605) in 23S rRNA</text>
        <dbReference type="Rhea" id="RHEA:42520"/>
        <dbReference type="Rhea" id="RHEA-COMP:10095"/>
        <dbReference type="Rhea" id="RHEA-COMP:10096"/>
        <dbReference type="ChEBI" id="CHEBI:65314"/>
        <dbReference type="ChEBI" id="CHEBI:65315"/>
        <dbReference type="EC" id="5.4.99.22"/>
    </reaction>
</comment>
<comment type="similarity">
    <text evidence="4">Belongs to the pseudouridine synthase RsuA family.</text>
</comment>
<protein>
    <recommendedName>
        <fullName>Ribosomal large subunit pseudouridine synthase B</fullName>
        <ecNumber>5.4.99.22</ecNumber>
    </recommendedName>
    <alternativeName>
        <fullName>23S rRNA pseudouridine(2605) synthase</fullName>
    </alternativeName>
    <alternativeName>
        <fullName>rRNA pseudouridylate synthase B</fullName>
    </alternativeName>
    <alternativeName>
        <fullName>rRNA-uridine isomerase B</fullName>
    </alternativeName>
</protein>
<name>RLUB_PSEAE</name>
<dbReference type="EC" id="5.4.99.22"/>
<dbReference type="EMBL" id="AE004091">
    <property type="protein sequence ID" value="AAG06567.1"/>
    <property type="molecule type" value="Genomic_DNA"/>
</dbReference>
<dbReference type="PIR" id="E83247">
    <property type="entry name" value="E83247"/>
</dbReference>
<dbReference type="RefSeq" id="NP_251869.1">
    <property type="nucleotide sequence ID" value="NC_002516.2"/>
</dbReference>
<dbReference type="RefSeq" id="WP_003113439.1">
    <property type="nucleotide sequence ID" value="NZ_QZGE01000023.1"/>
</dbReference>
<dbReference type="SMR" id="Q9HZ55"/>
<dbReference type="FunCoup" id="Q9HZ55">
    <property type="interactions" value="430"/>
</dbReference>
<dbReference type="STRING" id="208964.PA3179"/>
<dbReference type="PaxDb" id="208964-PA3179"/>
<dbReference type="GeneID" id="882705"/>
<dbReference type="KEGG" id="pae:PA3179"/>
<dbReference type="PATRIC" id="fig|208964.12.peg.3323"/>
<dbReference type="PseudoCAP" id="PA3179"/>
<dbReference type="HOGENOM" id="CLU_024979_1_1_6"/>
<dbReference type="InParanoid" id="Q9HZ55"/>
<dbReference type="OrthoDB" id="9807213at2"/>
<dbReference type="PhylomeDB" id="Q9HZ55"/>
<dbReference type="BioCyc" id="PAER208964:G1FZ6-3239-MONOMER"/>
<dbReference type="Proteomes" id="UP000002438">
    <property type="component" value="Chromosome"/>
</dbReference>
<dbReference type="GO" id="GO:0160139">
    <property type="term" value="F:23S rRNA pseudouridine(2605) synthase activity"/>
    <property type="evidence" value="ECO:0007669"/>
    <property type="project" value="UniProtKB-EC"/>
</dbReference>
<dbReference type="GO" id="GO:0003723">
    <property type="term" value="F:RNA binding"/>
    <property type="evidence" value="ECO:0007669"/>
    <property type="project" value="UniProtKB-KW"/>
</dbReference>
<dbReference type="GO" id="GO:0000455">
    <property type="term" value="P:enzyme-directed rRNA pseudouridine synthesis"/>
    <property type="evidence" value="ECO:0007669"/>
    <property type="project" value="UniProtKB-ARBA"/>
</dbReference>
<dbReference type="CDD" id="cd02556">
    <property type="entry name" value="PseudoU_synth_RluB"/>
    <property type="match status" value="1"/>
</dbReference>
<dbReference type="CDD" id="cd00165">
    <property type="entry name" value="S4"/>
    <property type="match status" value="1"/>
</dbReference>
<dbReference type="FunFam" id="3.10.290.10:FF:000003">
    <property type="entry name" value="Pseudouridine synthase"/>
    <property type="match status" value="1"/>
</dbReference>
<dbReference type="FunFam" id="3.30.70.1560:FF:000001">
    <property type="entry name" value="Pseudouridine synthase"/>
    <property type="match status" value="1"/>
</dbReference>
<dbReference type="FunFam" id="3.30.70.580:FF:000009">
    <property type="entry name" value="Pseudouridine synthase"/>
    <property type="match status" value="1"/>
</dbReference>
<dbReference type="Gene3D" id="3.30.70.1560">
    <property type="entry name" value="Alpha-L RNA-binding motif"/>
    <property type="match status" value="1"/>
</dbReference>
<dbReference type="Gene3D" id="3.30.70.580">
    <property type="entry name" value="Pseudouridine synthase I, catalytic domain, N-terminal subdomain"/>
    <property type="match status" value="1"/>
</dbReference>
<dbReference type="Gene3D" id="3.10.290.10">
    <property type="entry name" value="RNA-binding S4 domain"/>
    <property type="match status" value="1"/>
</dbReference>
<dbReference type="InterPro" id="IPR042092">
    <property type="entry name" value="PsdUridine_s_RsuA/RluB/E/F_cat"/>
</dbReference>
<dbReference type="InterPro" id="IPR020103">
    <property type="entry name" value="PsdUridine_synth_cat_dom_sf"/>
</dbReference>
<dbReference type="InterPro" id="IPR006145">
    <property type="entry name" value="PsdUridine_synth_RsuA/RluA"/>
</dbReference>
<dbReference type="InterPro" id="IPR000748">
    <property type="entry name" value="PsdUridine_synth_RsuA/RluB/E/F"/>
</dbReference>
<dbReference type="InterPro" id="IPR018496">
    <property type="entry name" value="PsdUridine_synth_RsuA/RluB_CS"/>
</dbReference>
<dbReference type="InterPro" id="IPR050343">
    <property type="entry name" value="RsuA_PseudoU_synthase"/>
</dbReference>
<dbReference type="InterPro" id="IPR002942">
    <property type="entry name" value="S4_RNA-bd"/>
</dbReference>
<dbReference type="InterPro" id="IPR036986">
    <property type="entry name" value="S4_RNA-bd_sf"/>
</dbReference>
<dbReference type="InterPro" id="IPR020094">
    <property type="entry name" value="TruA/RsuA/RluB/E/F_N"/>
</dbReference>
<dbReference type="NCBIfam" id="NF007976">
    <property type="entry name" value="PRK10700.1"/>
    <property type="match status" value="1"/>
</dbReference>
<dbReference type="NCBIfam" id="TIGR00093">
    <property type="entry name" value="pseudouridine synthase"/>
    <property type="match status" value="1"/>
</dbReference>
<dbReference type="PANTHER" id="PTHR47683">
    <property type="entry name" value="PSEUDOURIDINE SYNTHASE FAMILY PROTEIN-RELATED"/>
    <property type="match status" value="1"/>
</dbReference>
<dbReference type="PANTHER" id="PTHR47683:SF3">
    <property type="entry name" value="RIBOSOMAL LARGE SUBUNIT PSEUDOURIDINE SYNTHASE B"/>
    <property type="match status" value="1"/>
</dbReference>
<dbReference type="Pfam" id="PF00849">
    <property type="entry name" value="PseudoU_synth_2"/>
    <property type="match status" value="1"/>
</dbReference>
<dbReference type="Pfam" id="PF01479">
    <property type="entry name" value="S4"/>
    <property type="match status" value="1"/>
</dbReference>
<dbReference type="SMART" id="SM00363">
    <property type="entry name" value="S4"/>
    <property type="match status" value="1"/>
</dbReference>
<dbReference type="SUPFAM" id="SSF55174">
    <property type="entry name" value="Alpha-L RNA-binding motif"/>
    <property type="match status" value="1"/>
</dbReference>
<dbReference type="SUPFAM" id="SSF55120">
    <property type="entry name" value="Pseudouridine synthase"/>
    <property type="match status" value="1"/>
</dbReference>
<dbReference type="PROSITE" id="PS01149">
    <property type="entry name" value="PSI_RSU"/>
    <property type="match status" value="1"/>
</dbReference>
<dbReference type="PROSITE" id="PS50889">
    <property type="entry name" value="S4"/>
    <property type="match status" value="1"/>
</dbReference>
<accession>Q9HZ55</accession>
<feature type="chain" id="PRO_0000099988" description="Ribosomal large subunit pseudouridine synthase B">
    <location>
        <begin position="1"/>
        <end position="386"/>
    </location>
</feature>
<feature type="domain" description="S4 RNA-binding" evidence="2">
    <location>
        <begin position="14"/>
        <end position="75"/>
    </location>
</feature>
<feature type="region of interest" description="Disordered" evidence="3">
    <location>
        <begin position="260"/>
        <end position="386"/>
    </location>
</feature>
<feature type="compositionally biased region" description="Basic and acidic residues" evidence="3">
    <location>
        <begin position="267"/>
        <end position="276"/>
    </location>
</feature>
<feature type="compositionally biased region" description="Basic and acidic residues" evidence="3">
    <location>
        <begin position="284"/>
        <end position="306"/>
    </location>
</feature>
<feature type="compositionally biased region" description="Low complexity" evidence="3">
    <location>
        <begin position="307"/>
        <end position="321"/>
    </location>
</feature>
<feature type="compositionally biased region" description="Basic and acidic residues" evidence="3">
    <location>
        <begin position="335"/>
        <end position="354"/>
    </location>
</feature>
<feature type="active site" description="Nucleophile" evidence="1">
    <location>
        <position position="119"/>
    </location>
</feature>
<reference key="1">
    <citation type="journal article" date="2000" name="Nature">
        <title>Complete genome sequence of Pseudomonas aeruginosa PAO1, an opportunistic pathogen.</title>
        <authorList>
            <person name="Stover C.K."/>
            <person name="Pham X.-Q.T."/>
            <person name="Erwin A.L."/>
            <person name="Mizoguchi S.D."/>
            <person name="Warrener P."/>
            <person name="Hickey M.J."/>
            <person name="Brinkman F.S.L."/>
            <person name="Hufnagle W.O."/>
            <person name="Kowalik D.J."/>
            <person name="Lagrou M."/>
            <person name="Garber R.L."/>
            <person name="Goltry L."/>
            <person name="Tolentino E."/>
            <person name="Westbrock-Wadman S."/>
            <person name="Yuan Y."/>
            <person name="Brody L.L."/>
            <person name="Coulter S.N."/>
            <person name="Folger K.R."/>
            <person name="Kas A."/>
            <person name="Larbig K."/>
            <person name="Lim R.M."/>
            <person name="Smith K.A."/>
            <person name="Spencer D.H."/>
            <person name="Wong G.K.-S."/>
            <person name="Wu Z."/>
            <person name="Paulsen I.T."/>
            <person name="Reizer J."/>
            <person name="Saier M.H. Jr."/>
            <person name="Hancock R.E.W."/>
            <person name="Lory S."/>
            <person name="Olson M.V."/>
        </authorList>
    </citation>
    <scope>NUCLEOTIDE SEQUENCE [LARGE SCALE GENOMIC DNA]</scope>
    <source>
        <strain>ATCC 15692 / DSM 22644 / CIP 104116 / JCM 14847 / LMG 12228 / 1C / PRS 101 / PAO1</strain>
    </source>
</reference>
<organism>
    <name type="scientific">Pseudomonas aeruginosa (strain ATCC 15692 / DSM 22644 / CIP 104116 / JCM 14847 / LMG 12228 / 1C / PRS 101 / PAO1)</name>
    <dbReference type="NCBI Taxonomy" id="208964"/>
    <lineage>
        <taxon>Bacteria</taxon>
        <taxon>Pseudomonadati</taxon>
        <taxon>Pseudomonadota</taxon>
        <taxon>Gammaproteobacteria</taxon>
        <taxon>Pseudomonadales</taxon>
        <taxon>Pseudomonadaceae</taxon>
        <taxon>Pseudomonas</taxon>
    </lineage>
</organism>
<sequence length="386" mass="43725">MNDTPENPHVPVGEKLQKVLARLGVGSRRDVEVWIAEGRVNVNGSVASLGQRVDSHDAITVDGHLIRREEAAESVRRVLIYNKPEGEVCTRDDPEGRPTIFDRLPRLRTGRWINVGRLDINTTGLLLFTTDGELANRLMHPSYEMDREYAVRVRGEVTEEMIERLLNGVMLEDGPAKFSDIQQAPGGEGFNHWYHCVVMEGRNREVRRLWESQGLVVSRLKRVRFGPVFLTSELTMGRYREMDQREIDILSEEVGLKPVALPGMTTKAREKAERQQRKQARPLARSERPEAGRKRAPRREDGENAARRAPASRPARGPQPSAERKGREQGTPVAERPRESNRKPRPSKPRDERPASAPGDKPAARKPQVKRRPKPAGDGMRPGFRR</sequence>
<proteinExistence type="inferred from homology"/>
<keyword id="KW-0413">Isomerase</keyword>
<keyword id="KW-1185">Reference proteome</keyword>
<keyword id="KW-0694">RNA-binding</keyword>
<keyword id="KW-0698">rRNA processing</keyword>